<reference key="1">
    <citation type="journal article" date="2004" name="Nature">
        <title>Genome sequence of Silicibacter pomeroyi reveals adaptations to the marine environment.</title>
        <authorList>
            <person name="Moran M.A."/>
            <person name="Buchan A."/>
            <person name="Gonzalez J.M."/>
            <person name="Heidelberg J.F."/>
            <person name="Whitman W.B."/>
            <person name="Kiene R.P."/>
            <person name="Henriksen J.R."/>
            <person name="King G.M."/>
            <person name="Belas R."/>
            <person name="Fuqua C."/>
            <person name="Brinkac L.M."/>
            <person name="Lewis M."/>
            <person name="Johri S."/>
            <person name="Weaver B."/>
            <person name="Pai G."/>
            <person name="Eisen J.A."/>
            <person name="Rahe E."/>
            <person name="Sheldon W.M."/>
            <person name="Ye W."/>
            <person name="Miller T.R."/>
            <person name="Carlton J."/>
            <person name="Rasko D.A."/>
            <person name="Paulsen I.T."/>
            <person name="Ren Q."/>
            <person name="Daugherty S.C."/>
            <person name="DeBoy R.T."/>
            <person name="Dodson R.J."/>
            <person name="Durkin A.S."/>
            <person name="Madupu R."/>
            <person name="Nelson W.C."/>
            <person name="Sullivan S.A."/>
            <person name="Rosovitz M.J."/>
            <person name="Haft D.H."/>
            <person name="Selengut J."/>
            <person name="Ward N."/>
        </authorList>
    </citation>
    <scope>NUCLEOTIDE SEQUENCE [LARGE SCALE GENOMIC DNA]</scope>
    <source>
        <strain>ATCC 700808 / DSM 15171 / DSS-3</strain>
    </source>
</reference>
<reference key="2">
    <citation type="journal article" date="2014" name="Stand. Genomic Sci.">
        <title>An updated genome annotation for the model marine bacterium Ruegeria pomeroyi DSS-3.</title>
        <authorList>
            <person name="Rivers A.R."/>
            <person name="Smith C.B."/>
            <person name="Moran M.A."/>
        </authorList>
    </citation>
    <scope>GENOME REANNOTATION</scope>
    <source>
        <strain>ATCC 700808 / DSM 15171 / DSS-3</strain>
    </source>
</reference>
<proteinExistence type="inferred from homology"/>
<protein>
    <recommendedName>
        <fullName evidence="1">Glycerol-3-phosphate acyltransferase</fullName>
    </recommendedName>
    <alternativeName>
        <fullName evidence="1">Acyl-PO4 G3P acyltransferase</fullName>
    </alternativeName>
    <alternativeName>
        <fullName evidence="1">Acyl-phosphate--glycerol-3-phosphate acyltransferase</fullName>
    </alternativeName>
    <alternativeName>
        <fullName evidence="1">G3P acyltransferase</fullName>
        <shortName evidence="1">GPAT</shortName>
        <ecNumber evidence="1">2.3.1.275</ecNumber>
    </alternativeName>
    <alternativeName>
        <fullName evidence="1">Lysophosphatidic acid synthase</fullName>
        <shortName evidence="1">LPA synthase</shortName>
    </alternativeName>
</protein>
<accession>Q5LX62</accession>
<organism>
    <name type="scientific">Ruegeria pomeroyi (strain ATCC 700808 / DSM 15171 / DSS-3)</name>
    <name type="common">Silicibacter pomeroyi</name>
    <dbReference type="NCBI Taxonomy" id="246200"/>
    <lineage>
        <taxon>Bacteria</taxon>
        <taxon>Pseudomonadati</taxon>
        <taxon>Pseudomonadota</taxon>
        <taxon>Alphaproteobacteria</taxon>
        <taxon>Rhodobacterales</taxon>
        <taxon>Roseobacteraceae</taxon>
        <taxon>Ruegeria</taxon>
    </lineage>
</organism>
<gene>
    <name evidence="1" type="primary">plsY</name>
    <name type="ordered locus">SPO0283</name>
</gene>
<comment type="function">
    <text evidence="1">Catalyzes the transfer of an acyl group from acyl-phosphate (acyl-PO(4)) to glycerol-3-phosphate (G3P) to form lysophosphatidic acid (LPA). This enzyme utilizes acyl-phosphate as fatty acyl donor, but not acyl-CoA or acyl-ACP.</text>
</comment>
<comment type="catalytic activity">
    <reaction evidence="1">
        <text>an acyl phosphate + sn-glycerol 3-phosphate = a 1-acyl-sn-glycero-3-phosphate + phosphate</text>
        <dbReference type="Rhea" id="RHEA:34075"/>
        <dbReference type="ChEBI" id="CHEBI:43474"/>
        <dbReference type="ChEBI" id="CHEBI:57597"/>
        <dbReference type="ChEBI" id="CHEBI:57970"/>
        <dbReference type="ChEBI" id="CHEBI:59918"/>
        <dbReference type="EC" id="2.3.1.275"/>
    </reaction>
</comment>
<comment type="pathway">
    <text evidence="1">Lipid metabolism; phospholipid metabolism.</text>
</comment>
<comment type="subunit">
    <text evidence="1">Probably interacts with PlsX.</text>
</comment>
<comment type="subcellular location">
    <subcellularLocation>
        <location evidence="1">Cell inner membrane</location>
        <topology evidence="1">Multi-pass membrane protein</topology>
    </subcellularLocation>
</comment>
<comment type="similarity">
    <text evidence="1">Belongs to the PlsY family.</text>
</comment>
<evidence type="ECO:0000255" key="1">
    <source>
        <dbReference type="HAMAP-Rule" id="MF_01043"/>
    </source>
</evidence>
<feature type="chain" id="PRO_0000188448" description="Glycerol-3-phosphate acyltransferase">
    <location>
        <begin position="1"/>
        <end position="203"/>
    </location>
</feature>
<feature type="transmembrane region" description="Helical" evidence="1">
    <location>
        <begin position="10"/>
        <end position="30"/>
    </location>
</feature>
<feature type="transmembrane region" description="Helical" evidence="1">
    <location>
        <begin position="59"/>
        <end position="79"/>
    </location>
</feature>
<feature type="transmembrane region" description="Helical" evidence="1">
    <location>
        <begin position="87"/>
        <end position="107"/>
    </location>
</feature>
<feature type="transmembrane region" description="Helical" evidence="1">
    <location>
        <begin position="116"/>
        <end position="136"/>
    </location>
</feature>
<feature type="transmembrane region" description="Helical" evidence="1">
    <location>
        <begin position="160"/>
        <end position="180"/>
    </location>
</feature>
<sequence length="203" mass="20999">MPAFDTPAMMLILWAVIGYGLGSIPFGLILTRAMGMGDLRQIGSGNIGTTNVLRTGNKGAAALTLLLDGGKGAVAVLLARAFAGEDAAQVAALAAFVGHCYPIWLGFKGGKGVATFLGLWLALAWPVGVACCLSWLAGAAVTRISSMGALVAAASSTFWLVLLDQGAGFVLGIVLTLMVFWRHRANIARLKARTEPKIGQKSA</sequence>
<dbReference type="EC" id="2.3.1.275" evidence="1"/>
<dbReference type="EMBL" id="CP000031">
    <property type="protein sequence ID" value="AAV93601.1"/>
    <property type="molecule type" value="Genomic_DNA"/>
</dbReference>
<dbReference type="RefSeq" id="WP_011046044.1">
    <property type="nucleotide sequence ID" value="NC_003911.12"/>
</dbReference>
<dbReference type="SMR" id="Q5LX62"/>
<dbReference type="STRING" id="246200.SPO0283"/>
<dbReference type="PaxDb" id="246200-SPO0283"/>
<dbReference type="KEGG" id="sil:SPO0283"/>
<dbReference type="eggNOG" id="COG0344">
    <property type="taxonomic scope" value="Bacteria"/>
</dbReference>
<dbReference type="HOGENOM" id="CLU_081254_1_0_5"/>
<dbReference type="OrthoDB" id="9777124at2"/>
<dbReference type="UniPathway" id="UPA00085"/>
<dbReference type="Proteomes" id="UP000001023">
    <property type="component" value="Chromosome"/>
</dbReference>
<dbReference type="GO" id="GO:0005886">
    <property type="term" value="C:plasma membrane"/>
    <property type="evidence" value="ECO:0007669"/>
    <property type="project" value="UniProtKB-SubCell"/>
</dbReference>
<dbReference type="GO" id="GO:0043772">
    <property type="term" value="F:acyl-phosphate glycerol-3-phosphate acyltransferase activity"/>
    <property type="evidence" value="ECO:0007669"/>
    <property type="project" value="UniProtKB-UniRule"/>
</dbReference>
<dbReference type="GO" id="GO:0008654">
    <property type="term" value="P:phospholipid biosynthetic process"/>
    <property type="evidence" value="ECO:0007669"/>
    <property type="project" value="UniProtKB-UniRule"/>
</dbReference>
<dbReference type="HAMAP" id="MF_01043">
    <property type="entry name" value="PlsY"/>
    <property type="match status" value="1"/>
</dbReference>
<dbReference type="InterPro" id="IPR003811">
    <property type="entry name" value="G3P_acylTferase_PlsY"/>
</dbReference>
<dbReference type="NCBIfam" id="TIGR00023">
    <property type="entry name" value="glycerol-3-phosphate 1-O-acyltransferase PlsY"/>
    <property type="match status" value="1"/>
</dbReference>
<dbReference type="PANTHER" id="PTHR30309:SF0">
    <property type="entry name" value="GLYCEROL-3-PHOSPHATE ACYLTRANSFERASE-RELATED"/>
    <property type="match status" value="1"/>
</dbReference>
<dbReference type="PANTHER" id="PTHR30309">
    <property type="entry name" value="INNER MEMBRANE PROTEIN YGIH"/>
    <property type="match status" value="1"/>
</dbReference>
<dbReference type="Pfam" id="PF02660">
    <property type="entry name" value="G3P_acyltransf"/>
    <property type="match status" value="1"/>
</dbReference>
<dbReference type="SMART" id="SM01207">
    <property type="entry name" value="G3P_acyltransf"/>
    <property type="match status" value="1"/>
</dbReference>
<keyword id="KW-0997">Cell inner membrane</keyword>
<keyword id="KW-1003">Cell membrane</keyword>
<keyword id="KW-0444">Lipid biosynthesis</keyword>
<keyword id="KW-0443">Lipid metabolism</keyword>
<keyword id="KW-0472">Membrane</keyword>
<keyword id="KW-0594">Phospholipid biosynthesis</keyword>
<keyword id="KW-1208">Phospholipid metabolism</keyword>
<keyword id="KW-1185">Reference proteome</keyword>
<keyword id="KW-0808">Transferase</keyword>
<keyword id="KW-0812">Transmembrane</keyword>
<keyword id="KW-1133">Transmembrane helix</keyword>
<name>PLSY_RUEPO</name>